<proteinExistence type="evidence at protein level"/>
<feature type="peptide" id="PRO_0000044895" description="Potassium channel toxin alpha-KTx 15.3" evidence="2">
    <location>
        <begin position="1"/>
        <end position="37"/>
    </location>
</feature>
<feature type="site" description="Hot spot residue in hERG blocking currents" evidence="9">
    <location>
        <position position="6"/>
    </location>
</feature>
<feature type="site" description="Hot spot basic residue in hERG blocking currents" evidence="9">
    <location>
        <position position="18"/>
    </location>
</feature>
<feature type="site" description="Hot spot basic residue in hERG blocking currents" evidence="9">
    <location>
        <position position="19"/>
    </location>
</feature>
<feature type="site" description="Basic residue of the functional dyad" evidence="1">
    <location>
        <position position="27"/>
    </location>
</feature>
<feature type="site" description="Aromatic residue of the functional dyad" evidence="1">
    <location>
        <position position="36"/>
    </location>
</feature>
<feature type="modified residue" description="Pyrrolidone carboxylic acid" evidence="2">
    <location>
        <position position="1"/>
    </location>
</feature>
<feature type="disulfide bond" evidence="6">
    <location>
        <begin position="8"/>
        <end position="28"/>
    </location>
</feature>
<feature type="disulfide bond" evidence="6">
    <location>
        <begin position="13"/>
        <end position="33"/>
    </location>
</feature>
<feature type="disulfide bond" evidence="6">
    <location>
        <begin position="17"/>
        <end position="35"/>
    </location>
</feature>
<feature type="mutagenesis site" description="Increase in hERG blocking activity with activity close to BmTx3 activity (IC(50)=3.2 uM)." evidence="3">
    <original>K</original>
    <variation>V</variation>
    <location>
        <position position="6"/>
    </location>
</feature>
<feature type="mutagenesis site" description="Loss of hERG blocking activity." evidence="3">
    <original>R</original>
    <variation>A</variation>
    <location>
        <position position="18"/>
    </location>
</feature>
<feature type="mutagenesis site" description="Loss of hERG blocking activity." evidence="3">
    <original>K</original>
    <variation>A</variation>
    <location>
        <position position="19"/>
    </location>
</feature>
<feature type="strand" evidence="10">
    <location>
        <begin position="2"/>
        <end position="7"/>
    </location>
</feature>
<feature type="helix" evidence="10">
    <location>
        <begin position="14"/>
        <end position="20"/>
    </location>
</feature>
<feature type="strand" evidence="10">
    <location>
        <begin position="26"/>
        <end position="29"/>
    </location>
</feature>
<feature type="strand" evidence="10">
    <location>
        <begin position="32"/>
        <end position="35"/>
    </location>
</feature>
<reference key="1">
    <citation type="journal article" date="2002" name="Eur. J. Biochem.">
        <title>Expanding the scorpion toxin alpha-KTX 15 family with AmmTX3 from Androctonus mauretanicus.</title>
        <authorList>
            <person name="Vacher H."/>
            <person name="Alami M."/>
            <person name="Crest M."/>
            <person name="Possani L.D."/>
            <person name="Bougis P.E."/>
            <person name="Martin-Eauclaire M.-F."/>
        </authorList>
    </citation>
    <scope>PROTEIN SEQUENCE</scope>
    <scope>FUNCTION</scope>
    <scope>MASS SPECTROMETRY</scope>
    <scope>SUBCELLULAR LOCATION</scope>
    <scope>PYROGLUTAMATE FORMATION AT GLN-1</scope>
    <source>
        <tissue>Venom</tissue>
    </source>
</reference>
<reference key="2">
    <citation type="journal article" date="2008" name="Biochem. Pharmacol.">
        <title>A common 'hot spot' confers hERG blockade activity to alpha-scorpion toxins affecting K+ channels.</title>
        <authorList>
            <person name="Abdel-Mottaleb Y."/>
            <person name="Corzo G."/>
            <person name="Martin-Eauclaire M.F."/>
            <person name="Satake H."/>
            <person name="Ceard B."/>
            <person name="Peigneur S."/>
            <person name="Nambaru P."/>
            <person name="Bougis P.E."/>
            <person name="Possani L.D."/>
            <person name="Tytgat J."/>
        </authorList>
    </citation>
    <scope>MUTAGENESIS OF LYS-6; ARG-18 AND LYS-19</scope>
</reference>
<reference key="3">
    <citation type="journal article" date="2013" name="J. Physiol. (Lond.)">
        <title>Dipeptidyl-peptidase-like-proteins confer high sensitivity to the scorpion toxin AmmTX3 to Kv4-mediated A-type K+ channels.</title>
        <authorList>
            <person name="Maffie J.K."/>
            <person name="Dvoretskova E."/>
            <person name="Bougis P.E."/>
            <person name="Martin-Eauclaire M.F."/>
            <person name="Rudy B."/>
        </authorList>
    </citation>
    <scope>FUNCTION</scope>
</reference>
<reference key="4">
    <citation type="journal article" date="2015" name="Behav. Pharmacol.">
        <title>Kv4 channel blockade reduces motor and neuropsychiatric symptoms in rodent models of Parkinson's disease.</title>
        <authorList>
            <person name="Aidi-Knani S."/>
            <person name="Regaya I."/>
            <person name="Amalric M."/>
            <person name="Mourre C."/>
        </authorList>
    </citation>
    <scope>FUNCTION</scope>
    <scope>BIOASSAY</scope>
</reference>
<reference key="5">
    <citation type="journal article" date="2019" name="Bioorg. Med. Chem.">
        <title>Synthesis by native chemical ligation and characterization of the scorpion toxin AmmTx3.</title>
        <authorList>
            <person name="Zoukimian C."/>
            <person name="Meudal H."/>
            <person name="De Waard S."/>
            <person name="Ouares K.A."/>
            <person name="Nicolas S."/>
            <person name="Canepari M."/>
            <person name="Beroud R."/>
            <person name="Landon C."/>
            <person name="De Waard M."/>
            <person name="Boturyn D."/>
        </authorList>
    </citation>
    <scope>STRUCTURE BY NMR</scope>
    <scope>DISULFIDE BOND</scope>
    <scope>SYNTHESIS</scope>
    <scope>FUNCTION</scope>
</reference>
<dbReference type="PDB" id="6GGZ">
    <property type="method" value="NMR"/>
    <property type="chains" value="1=2-37"/>
</dbReference>
<dbReference type="PDBsum" id="6GGZ"/>
<dbReference type="BMRB" id="P60208"/>
<dbReference type="SMR" id="P60208"/>
<dbReference type="GO" id="GO:0005576">
    <property type="term" value="C:extracellular region"/>
    <property type="evidence" value="ECO:0007669"/>
    <property type="project" value="UniProtKB-SubCell"/>
</dbReference>
<dbReference type="GO" id="GO:0008200">
    <property type="term" value="F:ion channel inhibitor activity"/>
    <property type="evidence" value="ECO:0007669"/>
    <property type="project" value="InterPro"/>
</dbReference>
<dbReference type="GO" id="GO:0015459">
    <property type="term" value="F:potassium channel regulator activity"/>
    <property type="evidence" value="ECO:0007669"/>
    <property type="project" value="UniProtKB-KW"/>
</dbReference>
<dbReference type="GO" id="GO:0090729">
    <property type="term" value="F:toxin activity"/>
    <property type="evidence" value="ECO:0007669"/>
    <property type="project" value="UniProtKB-KW"/>
</dbReference>
<dbReference type="Gene3D" id="3.30.30.10">
    <property type="entry name" value="Knottin, scorpion toxin-like"/>
    <property type="match status" value="1"/>
</dbReference>
<dbReference type="InterPro" id="IPR036574">
    <property type="entry name" value="Scorpion_toxin-like_sf"/>
</dbReference>
<dbReference type="InterPro" id="IPR001947">
    <property type="entry name" value="Scorpion_toxinS_K_inh"/>
</dbReference>
<dbReference type="Pfam" id="PF00451">
    <property type="entry name" value="Toxin_2"/>
    <property type="match status" value="1"/>
</dbReference>
<dbReference type="SUPFAM" id="SSF57095">
    <property type="entry name" value="Scorpion toxin-like"/>
    <property type="match status" value="1"/>
</dbReference>
<dbReference type="PROSITE" id="PS01138">
    <property type="entry name" value="SCORP_SHORT_TOXIN"/>
    <property type="match status" value="1"/>
</dbReference>
<comment type="function">
    <text evidence="2 3 4 5 6">Inhibits A-type (Kv4) voltage-gated potassium channels of striated neurons (Ki=131 nM), probably by acting as a pore blocker (PubMed:12473099, PubMed:23440961, PubMed:30529150). Has also been shown to block ERG1/Kv11.1/KCNH2 potassium channels (IC(50)=7.9 uM) (PubMed:18687312). The presence of the Kv4-associated proteins DPP6 or DPP10 is mandatory to have high-affinity blockade of Kv4.2/KCND2 and Kv4.3/KCND3 channels (80-90% inhibition at 500 nM of toxin) (PubMed:23440961). In contrast, the presence of the Kv4-associated protein KChIP1/KCNIP1 does not enhance the affinity blockade (only 40% inhibition at 500 nM) (PubMed:23440961). In adult rat brain, the toxin binds to sites in the striatum, and cerebellum. It shares the same target in rat brain than AaTX1 (AC Q867F4) and BmTX3 (AC Q8I0L5). In DPP6 knockout mice, A-type currents are about 20-fold less affected by the toxin (PubMed:23440961). In rodent models of Parkinson's disease, the toxin reduces motor symptoms and emotional and cognitive symptoms (PubMed:25356731).</text>
</comment>
<comment type="subcellular location">
    <subcellularLocation>
        <location evidence="2">Secreted</location>
    </subcellularLocation>
</comment>
<comment type="tissue specificity">
    <text evidence="8">Expressed by the venom gland.</text>
</comment>
<comment type="domain">
    <text evidence="6">Has the structural arrangement of an alpha-helix connected to a beta-sheet by disulfide bonds (CSalpha/beta).</text>
</comment>
<comment type="mass spectrometry"/>
<comment type="similarity">
    <text evidence="8">Belongs to the short scorpion toxin superfamily. Potassium channel inhibitor family. Alpha-KTx 15 subfamily.</text>
</comment>
<organism>
    <name type="scientific">Androctonus mauritanicus mauritanicus</name>
    <name type="common">Scorpion</name>
    <dbReference type="NCBI Taxonomy" id="6860"/>
    <lineage>
        <taxon>Eukaryota</taxon>
        <taxon>Metazoa</taxon>
        <taxon>Ecdysozoa</taxon>
        <taxon>Arthropoda</taxon>
        <taxon>Chelicerata</taxon>
        <taxon>Arachnida</taxon>
        <taxon>Scorpiones</taxon>
        <taxon>Buthida</taxon>
        <taxon>Buthoidea</taxon>
        <taxon>Buthidae</taxon>
        <taxon>Androctonus</taxon>
    </lineage>
</organism>
<keyword id="KW-0002">3D-structure</keyword>
<keyword id="KW-0903">Direct protein sequencing</keyword>
<keyword id="KW-1015">Disulfide bond</keyword>
<keyword id="KW-0872">Ion channel impairing toxin</keyword>
<keyword id="KW-0528">Neurotoxin</keyword>
<keyword id="KW-0632">Potassium channel impairing toxin</keyword>
<keyword id="KW-0873">Pyrrolidone carboxylic acid</keyword>
<keyword id="KW-0964">Secreted</keyword>
<keyword id="KW-0800">Toxin</keyword>
<keyword id="KW-1220">Voltage-gated potassium channel impairing toxin</keyword>
<protein>
    <recommendedName>
        <fullName evidence="8">Potassium channel toxin alpha-KTx 15.3</fullName>
    </recommendedName>
    <alternativeName>
        <fullName evidence="7">Toxin AmmTX3</fullName>
    </alternativeName>
</protein>
<name>KA153_ANDMA</name>
<accession>P60208</accession>
<sequence>QIETNKKCQGGSCASVCRKVIGVAAGKCINGRCVCYP</sequence>
<evidence type="ECO:0000250" key="1"/>
<evidence type="ECO:0000269" key="2">
    <source>
    </source>
</evidence>
<evidence type="ECO:0000269" key="3">
    <source>
    </source>
</evidence>
<evidence type="ECO:0000269" key="4">
    <source>
    </source>
</evidence>
<evidence type="ECO:0000269" key="5">
    <source>
    </source>
</evidence>
<evidence type="ECO:0000269" key="6">
    <source>
    </source>
</evidence>
<evidence type="ECO:0000303" key="7">
    <source>
    </source>
</evidence>
<evidence type="ECO:0000305" key="8"/>
<evidence type="ECO:0000305" key="9">
    <source>
    </source>
</evidence>
<evidence type="ECO:0007829" key="10">
    <source>
        <dbReference type="PDB" id="6GGZ"/>
    </source>
</evidence>